<organism>
    <name type="scientific">Bacillus cereus (strain ATCC 14579 / DSM 31 / CCUG 7414 / JCM 2152 / NBRC 15305 / NCIMB 9373 / NCTC 2599 / NRRL B-3711)</name>
    <dbReference type="NCBI Taxonomy" id="226900"/>
    <lineage>
        <taxon>Bacteria</taxon>
        <taxon>Bacillati</taxon>
        <taxon>Bacillota</taxon>
        <taxon>Bacilli</taxon>
        <taxon>Bacillales</taxon>
        <taxon>Bacillaceae</taxon>
        <taxon>Bacillus</taxon>
        <taxon>Bacillus cereus group</taxon>
    </lineage>
</organism>
<comment type="function">
    <text evidence="1">Catalyzes the ATP- as well as the pyrophosphate-dependent phosphorylation of a specific serine residue in HPr, a phosphocarrier protein of the phosphoenolpyruvate-dependent sugar phosphotransferase system (PTS). HprK/P also catalyzes the pyrophosphate-producing, inorganic phosphate-dependent dephosphorylation (phosphorolysis) of seryl-phosphorylated HPr (P-Ser-HPr). The two antagonistic activities of HprK/P are regulated by several intracellular metabolites, which change their concentration in response to the absence or presence of rapidly metabolisable carbon sources (glucose, fructose, etc.) in the growth medium. Also phosphorylates/dephosphorylates the HPr-like catabolite repression protein crh on a specific serine residue. Therefore, by controlling the phosphorylation state of HPr and crh, HPrK/P is a sensor enzyme that plays a major role in the regulation of carbon metabolism and sugar transport: it mediates carbon catabolite repression (CCR), and regulates PTS-catalyzed carbohydrate uptake and inducer exclusion.</text>
</comment>
<comment type="catalytic activity">
    <reaction evidence="1">
        <text>[HPr protein]-L-serine + ATP = [HPr protein]-O-phospho-L-serine + ADP + H(+)</text>
        <dbReference type="Rhea" id="RHEA:46600"/>
        <dbReference type="Rhea" id="RHEA-COMP:11602"/>
        <dbReference type="Rhea" id="RHEA-COMP:11603"/>
        <dbReference type="ChEBI" id="CHEBI:15378"/>
        <dbReference type="ChEBI" id="CHEBI:29999"/>
        <dbReference type="ChEBI" id="CHEBI:30616"/>
        <dbReference type="ChEBI" id="CHEBI:83421"/>
        <dbReference type="ChEBI" id="CHEBI:456216"/>
    </reaction>
</comment>
<comment type="catalytic activity">
    <reaction evidence="1">
        <text>[HPr protein]-O-phospho-L-serine + phosphate + H(+) = [HPr protein]-L-serine + diphosphate</text>
        <dbReference type="Rhea" id="RHEA:46604"/>
        <dbReference type="Rhea" id="RHEA-COMP:11602"/>
        <dbReference type="Rhea" id="RHEA-COMP:11603"/>
        <dbReference type="ChEBI" id="CHEBI:15378"/>
        <dbReference type="ChEBI" id="CHEBI:29999"/>
        <dbReference type="ChEBI" id="CHEBI:33019"/>
        <dbReference type="ChEBI" id="CHEBI:43474"/>
        <dbReference type="ChEBI" id="CHEBI:83421"/>
    </reaction>
</comment>
<comment type="cofactor">
    <cofactor evidence="1">
        <name>Mg(2+)</name>
        <dbReference type="ChEBI" id="CHEBI:18420"/>
    </cofactor>
</comment>
<comment type="subunit">
    <text evidence="1">Homohexamer.</text>
</comment>
<comment type="domain">
    <text evidence="1">The Walker A ATP-binding motif also binds Pi and PPi.</text>
</comment>
<comment type="miscellaneous">
    <text evidence="1">Both phosphorylation and phosphorolysis are carried out by the same active site and suggest a common mechanism for both reactions.</text>
</comment>
<comment type="similarity">
    <text evidence="1">Belongs to the HPrK/P family.</text>
</comment>
<evidence type="ECO:0000255" key="1">
    <source>
        <dbReference type="HAMAP-Rule" id="MF_01249"/>
    </source>
</evidence>
<protein>
    <recommendedName>
        <fullName evidence="1">HPr kinase/phosphorylase</fullName>
        <shortName evidence="1">HPrK/P</shortName>
        <ecNumber evidence="1">2.7.11.-</ecNumber>
        <ecNumber evidence="1">2.7.4.-</ecNumber>
    </recommendedName>
    <alternativeName>
        <fullName evidence="1">HPr(Ser) kinase/phosphorylase</fullName>
    </alternativeName>
</protein>
<reference key="1">
    <citation type="journal article" date="2003" name="Nature">
        <title>Genome sequence of Bacillus cereus and comparative analysis with Bacillus anthracis.</title>
        <authorList>
            <person name="Ivanova N."/>
            <person name="Sorokin A."/>
            <person name="Anderson I."/>
            <person name="Galleron N."/>
            <person name="Candelon B."/>
            <person name="Kapatral V."/>
            <person name="Bhattacharyya A."/>
            <person name="Reznik G."/>
            <person name="Mikhailova N."/>
            <person name="Lapidus A."/>
            <person name="Chu L."/>
            <person name="Mazur M."/>
            <person name="Goltsman E."/>
            <person name="Larsen N."/>
            <person name="D'Souza M."/>
            <person name="Walunas T."/>
            <person name="Grechkin Y."/>
            <person name="Pusch G."/>
            <person name="Haselkorn R."/>
            <person name="Fonstein M."/>
            <person name="Ehrlich S.D."/>
            <person name="Overbeek R."/>
            <person name="Kyrpides N.C."/>
        </authorList>
    </citation>
    <scope>NUCLEOTIDE SEQUENCE [LARGE SCALE GENOMIC DNA]</scope>
    <source>
        <strain>ATCC 14579 / DSM 31 / CCUG 7414 / JCM 2152 / NBRC 15305 / NCIMB 9373 / NCTC 2599 / NRRL B-3711</strain>
    </source>
</reference>
<proteinExistence type="inferred from homology"/>
<sequence>MPKVRTKDLIEQFQLELISGEEGIHRPIDTSDLSRPGIEMAGFFTYYPADRVQLLGKTELTFFDTLTSEQKQERMKALCTEETPCIIVTRNQDVPDELLQASRESGMPLLRSSQTTTRLSSRLTNYLEGKLAPTTAVHGVLVDIYGVGVLITGQSGVGKSETALELVKRGHRLVADDSVEIRQEDEDMLVGSSPDLIEHLLEIRGLGIINVMTLFGAGAVRNYKRITLVINLEIWDQKKNYDRLGLDEEKMKIIDTELTKITLPVRPGRNLAVIIEVAAMNFRLKRMGVNAAQQFSERLMSAIELGNQE</sequence>
<feature type="chain" id="PRO_0000058944" description="HPr kinase/phosphorylase">
    <location>
        <begin position="1"/>
        <end position="309"/>
    </location>
</feature>
<feature type="region of interest" description="Important for the catalytic mechanism of both phosphorylation and dephosphorylation" evidence="1">
    <location>
        <begin position="201"/>
        <end position="210"/>
    </location>
</feature>
<feature type="region of interest" description="Important for the catalytic mechanism of dephosphorylation" evidence="1">
    <location>
        <begin position="264"/>
        <end position="269"/>
    </location>
</feature>
<feature type="active site" evidence="1">
    <location>
        <position position="138"/>
    </location>
</feature>
<feature type="active site" evidence="1">
    <location>
        <position position="159"/>
    </location>
</feature>
<feature type="active site" description="Proton acceptor; for phosphorylation activity. Proton donor; for dephosphorylation activity" evidence="1">
    <location>
        <position position="177"/>
    </location>
</feature>
<feature type="active site" evidence="1">
    <location>
        <position position="243"/>
    </location>
</feature>
<feature type="binding site" evidence="1">
    <location>
        <begin position="153"/>
        <end position="160"/>
    </location>
    <ligand>
        <name>ATP</name>
        <dbReference type="ChEBI" id="CHEBI:30616"/>
    </ligand>
</feature>
<feature type="binding site" evidence="1">
    <location>
        <position position="160"/>
    </location>
    <ligand>
        <name>Mg(2+)</name>
        <dbReference type="ChEBI" id="CHEBI:18420"/>
    </ligand>
</feature>
<feature type="binding site" evidence="1">
    <location>
        <position position="202"/>
    </location>
    <ligand>
        <name>Mg(2+)</name>
        <dbReference type="ChEBI" id="CHEBI:18420"/>
    </ligand>
</feature>
<keyword id="KW-0067">ATP-binding</keyword>
<keyword id="KW-0119">Carbohydrate metabolism</keyword>
<keyword id="KW-0418">Kinase</keyword>
<keyword id="KW-0460">Magnesium</keyword>
<keyword id="KW-0479">Metal-binding</keyword>
<keyword id="KW-0511">Multifunctional enzyme</keyword>
<keyword id="KW-0547">Nucleotide-binding</keyword>
<keyword id="KW-1185">Reference proteome</keyword>
<keyword id="KW-0723">Serine/threonine-protein kinase</keyword>
<keyword id="KW-0808">Transferase</keyword>
<dbReference type="EC" id="2.7.11.-" evidence="1"/>
<dbReference type="EC" id="2.7.4.-" evidence="1"/>
<dbReference type="EMBL" id="AE016877">
    <property type="protein sequence ID" value="AAP12029.1"/>
    <property type="molecule type" value="Genomic_DNA"/>
</dbReference>
<dbReference type="RefSeq" id="NP_834828.1">
    <property type="nucleotide sequence ID" value="NC_004722.1"/>
</dbReference>
<dbReference type="RefSeq" id="WP_001127250.1">
    <property type="nucleotide sequence ID" value="NZ_CP138336.1"/>
</dbReference>
<dbReference type="SMR" id="Q812J6"/>
<dbReference type="STRING" id="226900.BC_5164"/>
<dbReference type="GeneID" id="75088337"/>
<dbReference type="KEGG" id="bce:BC5164"/>
<dbReference type="PATRIC" id="fig|226900.8.peg.5322"/>
<dbReference type="HOGENOM" id="CLU_052030_0_1_9"/>
<dbReference type="OrthoDB" id="9778803at2"/>
<dbReference type="Proteomes" id="UP000001417">
    <property type="component" value="Chromosome"/>
</dbReference>
<dbReference type="GO" id="GO:0005829">
    <property type="term" value="C:cytosol"/>
    <property type="evidence" value="ECO:0000318"/>
    <property type="project" value="GO_Central"/>
</dbReference>
<dbReference type="GO" id="GO:0005524">
    <property type="term" value="F:ATP binding"/>
    <property type="evidence" value="ECO:0007669"/>
    <property type="project" value="UniProtKB-UniRule"/>
</dbReference>
<dbReference type="GO" id="GO:0000287">
    <property type="term" value="F:magnesium ion binding"/>
    <property type="evidence" value="ECO:0007669"/>
    <property type="project" value="UniProtKB-UniRule"/>
</dbReference>
<dbReference type="GO" id="GO:0000155">
    <property type="term" value="F:phosphorelay sensor kinase activity"/>
    <property type="evidence" value="ECO:0007669"/>
    <property type="project" value="InterPro"/>
</dbReference>
<dbReference type="GO" id="GO:0004674">
    <property type="term" value="F:protein serine/threonine kinase activity"/>
    <property type="evidence" value="ECO:0007669"/>
    <property type="project" value="UniProtKB-KW"/>
</dbReference>
<dbReference type="GO" id="GO:0004712">
    <property type="term" value="F:protein serine/threonine/tyrosine kinase activity"/>
    <property type="evidence" value="ECO:0007669"/>
    <property type="project" value="UniProtKB-UniRule"/>
</dbReference>
<dbReference type="GO" id="GO:0006109">
    <property type="term" value="P:regulation of carbohydrate metabolic process"/>
    <property type="evidence" value="ECO:0007669"/>
    <property type="project" value="UniProtKB-UniRule"/>
</dbReference>
<dbReference type="CDD" id="cd01918">
    <property type="entry name" value="HprK_C"/>
    <property type="match status" value="1"/>
</dbReference>
<dbReference type="FunFam" id="3.40.1390.20:FF:000002">
    <property type="entry name" value="HPr kinase/phosphorylase"/>
    <property type="match status" value="1"/>
</dbReference>
<dbReference type="FunFam" id="3.40.50.300:FF:000174">
    <property type="entry name" value="HPr kinase/phosphorylase"/>
    <property type="match status" value="1"/>
</dbReference>
<dbReference type="Gene3D" id="3.40.1390.20">
    <property type="entry name" value="HprK N-terminal domain-like"/>
    <property type="match status" value="1"/>
</dbReference>
<dbReference type="Gene3D" id="3.40.50.300">
    <property type="entry name" value="P-loop containing nucleotide triphosphate hydrolases"/>
    <property type="match status" value="1"/>
</dbReference>
<dbReference type="HAMAP" id="MF_01249">
    <property type="entry name" value="HPr_kinase"/>
    <property type="match status" value="1"/>
</dbReference>
<dbReference type="InterPro" id="IPR003755">
    <property type="entry name" value="HPr(Ser)_kin/Pase"/>
</dbReference>
<dbReference type="InterPro" id="IPR011104">
    <property type="entry name" value="Hpr_kin/Pase_C"/>
</dbReference>
<dbReference type="InterPro" id="IPR011126">
    <property type="entry name" value="Hpr_kin/Pase_Hpr_N"/>
</dbReference>
<dbReference type="InterPro" id="IPR027417">
    <property type="entry name" value="P-loop_NTPase"/>
</dbReference>
<dbReference type="InterPro" id="IPR028979">
    <property type="entry name" value="Ser_kin/Pase_Hpr-like_N_sf"/>
</dbReference>
<dbReference type="NCBIfam" id="TIGR00679">
    <property type="entry name" value="hpr-ser"/>
    <property type="match status" value="1"/>
</dbReference>
<dbReference type="PANTHER" id="PTHR30305:SF1">
    <property type="entry name" value="HPR KINASE_PHOSPHORYLASE"/>
    <property type="match status" value="1"/>
</dbReference>
<dbReference type="PANTHER" id="PTHR30305">
    <property type="entry name" value="PROTEIN YJDM-RELATED"/>
    <property type="match status" value="1"/>
</dbReference>
<dbReference type="Pfam" id="PF07475">
    <property type="entry name" value="Hpr_kinase_C"/>
    <property type="match status" value="1"/>
</dbReference>
<dbReference type="Pfam" id="PF02603">
    <property type="entry name" value="Hpr_kinase_N"/>
    <property type="match status" value="1"/>
</dbReference>
<dbReference type="SUPFAM" id="SSF75138">
    <property type="entry name" value="HprK N-terminal domain-like"/>
    <property type="match status" value="1"/>
</dbReference>
<dbReference type="SUPFAM" id="SSF53795">
    <property type="entry name" value="PEP carboxykinase-like"/>
    <property type="match status" value="1"/>
</dbReference>
<gene>
    <name evidence="1" type="primary">hprK</name>
    <name type="ordered locus">BC_5164</name>
</gene>
<name>HPRK_BACCR</name>
<accession>Q812J6</accession>